<protein>
    <recommendedName>
        <fullName>Cytochrome P450 BJ-4 homolog</fullName>
        <ecNumber>1.14.14.-</ecNumber>
    </recommendedName>
</protein>
<reference key="1">
    <citation type="journal article" date="1997" name="Nature">
        <title>Molecular basis of symbiosis between Rhizobium and legumes.</title>
        <authorList>
            <person name="Freiberg C.A."/>
            <person name="Fellay R."/>
            <person name="Bairoch A."/>
            <person name="Broughton W.J."/>
            <person name="Rosenthal A."/>
            <person name="Perret X."/>
        </authorList>
    </citation>
    <scope>NUCLEOTIDE SEQUENCE [LARGE SCALE GENOMIC DNA]</scope>
    <source>
        <strain>NBRC 101917 / NGR234</strain>
    </source>
</reference>
<reference key="2">
    <citation type="journal article" date="2009" name="Appl. Environ. Microbiol.">
        <title>Rhizobium sp. strain NGR234 possesses a remarkable number of secretion systems.</title>
        <authorList>
            <person name="Schmeisser C."/>
            <person name="Liesegang H."/>
            <person name="Krysciak D."/>
            <person name="Bakkou N."/>
            <person name="Le Quere A."/>
            <person name="Wollherr A."/>
            <person name="Heinemeyer I."/>
            <person name="Morgenstern B."/>
            <person name="Pommerening-Roeser A."/>
            <person name="Flores M."/>
            <person name="Palacios R."/>
            <person name="Brenner S."/>
            <person name="Gottschalk G."/>
            <person name="Schmitz R.A."/>
            <person name="Broughton W.J."/>
            <person name="Perret X."/>
            <person name="Strittmatter A.W."/>
            <person name="Streit W.R."/>
        </authorList>
    </citation>
    <scope>NUCLEOTIDE SEQUENCE [LARGE SCALE GENOMIC DNA]</scope>
    <source>
        <strain>NBRC 101917 / NGR234</strain>
    </source>
</reference>
<keyword id="KW-0349">Heme</keyword>
<keyword id="KW-0408">Iron</keyword>
<keyword id="KW-0479">Metal-binding</keyword>
<keyword id="KW-0503">Monooxygenase</keyword>
<keyword id="KW-0560">Oxidoreductase</keyword>
<keyword id="KW-0614">Plasmid</keyword>
<keyword id="KW-1185">Reference proteome</keyword>
<organism>
    <name type="scientific">Sinorhizobium fredii (strain NBRC 101917 / NGR234)</name>
    <dbReference type="NCBI Taxonomy" id="394"/>
    <lineage>
        <taxon>Bacteria</taxon>
        <taxon>Pseudomonadati</taxon>
        <taxon>Pseudomonadota</taxon>
        <taxon>Alphaproteobacteria</taxon>
        <taxon>Hyphomicrobiales</taxon>
        <taxon>Rhizobiaceae</taxon>
        <taxon>Sinorhizobium/Ensifer group</taxon>
        <taxon>Sinorhizobium</taxon>
    </lineage>
</organism>
<accession>P55540</accession>
<dbReference type="EC" id="1.14.14.-"/>
<dbReference type="EMBL" id="U00090">
    <property type="protein sequence ID" value="AAB91753.1"/>
    <property type="molecule type" value="Genomic_DNA"/>
</dbReference>
<dbReference type="PIR" id="T10876">
    <property type="entry name" value="T10876"/>
</dbReference>
<dbReference type="RefSeq" id="NP_443951.1">
    <property type="nucleotide sequence ID" value="NC_000914.2"/>
</dbReference>
<dbReference type="RefSeq" id="WP_010875299.1">
    <property type="nucleotide sequence ID" value="NC_000914.2"/>
</dbReference>
<dbReference type="SMR" id="P55540"/>
<dbReference type="KEGG" id="rhi:NGR_a02740"/>
<dbReference type="PATRIC" id="fig|394.7.peg.292"/>
<dbReference type="eggNOG" id="COG2124">
    <property type="taxonomic scope" value="Bacteria"/>
</dbReference>
<dbReference type="HOGENOM" id="CLU_001570_5_1_5"/>
<dbReference type="OrthoDB" id="9764248at2"/>
<dbReference type="Proteomes" id="UP000001054">
    <property type="component" value="Plasmid pNGR234a"/>
</dbReference>
<dbReference type="GO" id="GO:0020037">
    <property type="term" value="F:heme binding"/>
    <property type="evidence" value="ECO:0007669"/>
    <property type="project" value="InterPro"/>
</dbReference>
<dbReference type="GO" id="GO:0005506">
    <property type="term" value="F:iron ion binding"/>
    <property type="evidence" value="ECO:0007669"/>
    <property type="project" value="InterPro"/>
</dbReference>
<dbReference type="GO" id="GO:0004497">
    <property type="term" value="F:monooxygenase activity"/>
    <property type="evidence" value="ECO:0007669"/>
    <property type="project" value="UniProtKB-KW"/>
</dbReference>
<dbReference type="GO" id="GO:0016705">
    <property type="term" value="F:oxidoreductase activity, acting on paired donors, with incorporation or reduction of molecular oxygen"/>
    <property type="evidence" value="ECO:0007669"/>
    <property type="project" value="InterPro"/>
</dbReference>
<dbReference type="GO" id="GO:0016125">
    <property type="term" value="P:sterol metabolic process"/>
    <property type="evidence" value="ECO:0007669"/>
    <property type="project" value="TreeGrafter"/>
</dbReference>
<dbReference type="CDD" id="cd20614">
    <property type="entry name" value="CYPBJ-4-like"/>
    <property type="match status" value="1"/>
</dbReference>
<dbReference type="Gene3D" id="1.10.630.10">
    <property type="entry name" value="Cytochrome P450"/>
    <property type="match status" value="1"/>
</dbReference>
<dbReference type="InterPro" id="IPR001128">
    <property type="entry name" value="Cyt_P450"/>
</dbReference>
<dbReference type="InterPro" id="IPR017972">
    <property type="entry name" value="Cyt_P450_CS"/>
</dbReference>
<dbReference type="InterPro" id="IPR002403">
    <property type="entry name" value="Cyt_P450_E_grp-IV"/>
</dbReference>
<dbReference type="InterPro" id="IPR036396">
    <property type="entry name" value="Cyt_P450_sf"/>
</dbReference>
<dbReference type="PANTHER" id="PTHR24286">
    <property type="entry name" value="CYTOCHROME P450 26"/>
    <property type="match status" value="1"/>
</dbReference>
<dbReference type="PANTHER" id="PTHR24286:SF24">
    <property type="entry name" value="LANOSTEROL 14-ALPHA DEMETHYLASE"/>
    <property type="match status" value="1"/>
</dbReference>
<dbReference type="Pfam" id="PF00067">
    <property type="entry name" value="p450"/>
    <property type="match status" value="1"/>
</dbReference>
<dbReference type="PRINTS" id="PR00465">
    <property type="entry name" value="EP450IV"/>
</dbReference>
<dbReference type="PRINTS" id="PR00385">
    <property type="entry name" value="P450"/>
</dbReference>
<dbReference type="SUPFAM" id="SSF48264">
    <property type="entry name" value="Cytochrome P450"/>
    <property type="match status" value="1"/>
</dbReference>
<dbReference type="PROSITE" id="PS00086">
    <property type="entry name" value="CYTOCHROME_P450"/>
    <property type="match status" value="1"/>
</dbReference>
<geneLocation type="plasmid">
    <name>sym pNGR234a</name>
</geneLocation>
<feature type="chain" id="PRO_0000052310" description="Cytochrome P450 BJ-4 homolog">
    <location>
        <begin position="1"/>
        <end position="447"/>
    </location>
</feature>
<feature type="binding site" description="axial binding residue" evidence="1">
    <location>
        <position position="392"/>
    </location>
    <ligand>
        <name>heme</name>
        <dbReference type="ChEBI" id="CHEBI:30413"/>
    </ligand>
    <ligandPart>
        <name>Fe</name>
        <dbReference type="ChEBI" id="CHEBI:18248"/>
    </ligandPart>
</feature>
<evidence type="ECO:0000250" key="1"/>
<evidence type="ECO:0000305" key="2"/>
<gene>
    <name type="primary">cyp117A2</name>
    <name type="ordered locus">NGR_a02740</name>
    <name type="ORF">y4kV</name>
</gene>
<name>CPXU_SINFN</name>
<comment type="function">
    <text>Cytochromes P450 are a group of heme-thiolate monooxygenases. They oxidize a variety of structurally unrelated compounds, including steroids, fatty acids, and xenobiotics.</text>
</comment>
<comment type="cofactor">
    <cofactor evidence="1">
        <name>heme</name>
        <dbReference type="ChEBI" id="CHEBI:30413"/>
    </cofactor>
</comment>
<comment type="similarity">
    <text evidence="2">Belongs to the cytochrome P450 family.</text>
</comment>
<proteinExistence type="inferred from homology"/>
<sequence>MNVLLNPLNRRHRLRYDIPVMPGAFPLVGHLPAIVCDLPRLLRRAERTLGSHFWLDFGPAGHLMTCVDPHAFALLRHKDVSSALIEEIAPELLGGTLVAQDGGAHRQARDAIKAAFLPEGLTQAGIGDLFAPVIRARVQAWRDRGDVTILPETGDLMLKLIFTLMGVPAQDLPGWHRKYRQLLQLIVAPSVDLPGLPLRRGRAARDWIDAQLRQFVRDARAHAARTGLINDMVSAFDRSDDALSDDLLVANIRLLLLAGHDTTASTMAWMVIELARQPMLWDALVEEAQRVGAVPTRHADLEQCPVAEALFRETLRVHPATTLLPRRALQELQLGQRRIPAGTHLCIPLLHFSTSALLHEAPDQFRLARWLQRTEPIRPVDMLQFGTGPHVCIGYHLVWLELVQFSIALALTMHKAGVRPLLLSGVEKGRRYYPTAHPSMTIRIGFS</sequence>